<evidence type="ECO:0000255" key="1">
    <source>
        <dbReference type="HAMAP-Rule" id="MF_01302"/>
    </source>
</evidence>
<evidence type="ECO:0000305" key="2"/>
<organism>
    <name type="scientific">Pasteurella multocida (strain Pm70)</name>
    <dbReference type="NCBI Taxonomy" id="272843"/>
    <lineage>
        <taxon>Bacteria</taxon>
        <taxon>Pseudomonadati</taxon>
        <taxon>Pseudomonadota</taxon>
        <taxon>Gammaproteobacteria</taxon>
        <taxon>Pasteurellales</taxon>
        <taxon>Pasteurellaceae</taxon>
        <taxon>Pasteurella</taxon>
    </lineage>
</organism>
<name>RS8_PASMU</name>
<protein>
    <recommendedName>
        <fullName evidence="1">Small ribosomal subunit protein uS8</fullName>
    </recommendedName>
    <alternativeName>
        <fullName evidence="2">30S ribosomal protein S8</fullName>
    </alternativeName>
</protein>
<dbReference type="EMBL" id="AE004439">
    <property type="protein sequence ID" value="AAK03485.1"/>
    <property type="molecule type" value="Genomic_DNA"/>
</dbReference>
<dbReference type="RefSeq" id="WP_005724020.1">
    <property type="nucleotide sequence ID" value="NC_002663.1"/>
</dbReference>
<dbReference type="SMR" id="Q9CL44"/>
<dbReference type="STRING" id="272843.PM1401"/>
<dbReference type="EnsemblBacteria" id="AAK03485">
    <property type="protein sequence ID" value="AAK03485"/>
    <property type="gene ID" value="PM1401"/>
</dbReference>
<dbReference type="GeneID" id="77207040"/>
<dbReference type="KEGG" id="pmu:PM1401"/>
<dbReference type="HOGENOM" id="CLU_098428_0_0_6"/>
<dbReference type="OrthoDB" id="9802617at2"/>
<dbReference type="Proteomes" id="UP000000809">
    <property type="component" value="Chromosome"/>
</dbReference>
<dbReference type="GO" id="GO:1990904">
    <property type="term" value="C:ribonucleoprotein complex"/>
    <property type="evidence" value="ECO:0007669"/>
    <property type="project" value="UniProtKB-KW"/>
</dbReference>
<dbReference type="GO" id="GO:0005840">
    <property type="term" value="C:ribosome"/>
    <property type="evidence" value="ECO:0007669"/>
    <property type="project" value="UniProtKB-KW"/>
</dbReference>
<dbReference type="GO" id="GO:0019843">
    <property type="term" value="F:rRNA binding"/>
    <property type="evidence" value="ECO:0007669"/>
    <property type="project" value="UniProtKB-UniRule"/>
</dbReference>
<dbReference type="GO" id="GO:0003735">
    <property type="term" value="F:structural constituent of ribosome"/>
    <property type="evidence" value="ECO:0007669"/>
    <property type="project" value="InterPro"/>
</dbReference>
<dbReference type="GO" id="GO:0006412">
    <property type="term" value="P:translation"/>
    <property type="evidence" value="ECO:0007669"/>
    <property type="project" value="UniProtKB-UniRule"/>
</dbReference>
<dbReference type="FunFam" id="3.30.1370.30:FF:000003">
    <property type="entry name" value="30S ribosomal protein S8"/>
    <property type="match status" value="1"/>
</dbReference>
<dbReference type="FunFam" id="3.30.1490.10:FF:000001">
    <property type="entry name" value="30S ribosomal protein S8"/>
    <property type="match status" value="1"/>
</dbReference>
<dbReference type="Gene3D" id="3.30.1370.30">
    <property type="match status" value="1"/>
</dbReference>
<dbReference type="Gene3D" id="3.30.1490.10">
    <property type="match status" value="1"/>
</dbReference>
<dbReference type="HAMAP" id="MF_01302_B">
    <property type="entry name" value="Ribosomal_uS8_B"/>
    <property type="match status" value="1"/>
</dbReference>
<dbReference type="InterPro" id="IPR000630">
    <property type="entry name" value="Ribosomal_uS8"/>
</dbReference>
<dbReference type="InterPro" id="IPR047863">
    <property type="entry name" value="Ribosomal_uS8_CS"/>
</dbReference>
<dbReference type="InterPro" id="IPR035987">
    <property type="entry name" value="Ribosomal_uS8_sf"/>
</dbReference>
<dbReference type="NCBIfam" id="NF001109">
    <property type="entry name" value="PRK00136.1"/>
    <property type="match status" value="1"/>
</dbReference>
<dbReference type="PANTHER" id="PTHR11758">
    <property type="entry name" value="40S RIBOSOMAL PROTEIN S15A"/>
    <property type="match status" value="1"/>
</dbReference>
<dbReference type="Pfam" id="PF00410">
    <property type="entry name" value="Ribosomal_S8"/>
    <property type="match status" value="1"/>
</dbReference>
<dbReference type="SUPFAM" id="SSF56047">
    <property type="entry name" value="Ribosomal protein S8"/>
    <property type="match status" value="1"/>
</dbReference>
<dbReference type="PROSITE" id="PS00053">
    <property type="entry name" value="RIBOSOMAL_S8"/>
    <property type="match status" value="1"/>
</dbReference>
<reference key="1">
    <citation type="journal article" date="2001" name="Proc. Natl. Acad. Sci. U.S.A.">
        <title>Complete genomic sequence of Pasteurella multocida Pm70.</title>
        <authorList>
            <person name="May B.J."/>
            <person name="Zhang Q."/>
            <person name="Li L.L."/>
            <person name="Paustian M.L."/>
            <person name="Whittam T.S."/>
            <person name="Kapur V."/>
        </authorList>
    </citation>
    <scope>NUCLEOTIDE SEQUENCE [LARGE SCALE GENOMIC DNA]</scope>
    <source>
        <strain>Pm70</strain>
    </source>
</reference>
<sequence>MSMQDPIADMLTRIRNGQAANKVAISMPSSKLKVAIANVLAEEGYIESVKVLDGVKPELEITLKYFQGKPVVESIQRVSRPGLRIYKRKDELPKVMGGLGVAVVSTSKGVMTDRAARQAGLGGEIICYVA</sequence>
<feature type="chain" id="PRO_0000126458" description="Small ribosomal subunit protein uS8">
    <location>
        <begin position="1"/>
        <end position="130"/>
    </location>
</feature>
<comment type="function">
    <text evidence="1">One of the primary rRNA binding proteins, it binds directly to 16S rRNA central domain where it helps coordinate assembly of the platform of the 30S subunit.</text>
</comment>
<comment type="subunit">
    <text evidence="1">Part of the 30S ribosomal subunit. Contacts proteins S5 and S12.</text>
</comment>
<comment type="similarity">
    <text evidence="1">Belongs to the universal ribosomal protein uS8 family.</text>
</comment>
<proteinExistence type="inferred from homology"/>
<gene>
    <name evidence="1" type="primary">rpsH</name>
    <name evidence="1" type="synonym">rps8</name>
    <name type="ordered locus">PM1401</name>
</gene>
<keyword id="KW-1185">Reference proteome</keyword>
<keyword id="KW-0687">Ribonucleoprotein</keyword>
<keyword id="KW-0689">Ribosomal protein</keyword>
<keyword id="KW-0694">RNA-binding</keyword>
<keyword id="KW-0699">rRNA-binding</keyword>
<accession>Q9CL44</accession>